<dbReference type="EMBL" id="CP000316">
    <property type="protein sequence ID" value="ABE44355.1"/>
    <property type="molecule type" value="Genomic_DNA"/>
</dbReference>
<dbReference type="SMR" id="Q12AT7"/>
<dbReference type="STRING" id="296591.Bpro_2436"/>
<dbReference type="KEGG" id="pol:Bpro_2436"/>
<dbReference type="eggNOG" id="COG0691">
    <property type="taxonomic scope" value="Bacteria"/>
</dbReference>
<dbReference type="HOGENOM" id="CLU_108953_3_0_4"/>
<dbReference type="Proteomes" id="UP000001983">
    <property type="component" value="Chromosome"/>
</dbReference>
<dbReference type="GO" id="GO:0005829">
    <property type="term" value="C:cytosol"/>
    <property type="evidence" value="ECO:0007669"/>
    <property type="project" value="TreeGrafter"/>
</dbReference>
<dbReference type="GO" id="GO:0003723">
    <property type="term" value="F:RNA binding"/>
    <property type="evidence" value="ECO:0007669"/>
    <property type="project" value="UniProtKB-UniRule"/>
</dbReference>
<dbReference type="GO" id="GO:0070929">
    <property type="term" value="P:trans-translation"/>
    <property type="evidence" value="ECO:0007669"/>
    <property type="project" value="UniProtKB-UniRule"/>
</dbReference>
<dbReference type="CDD" id="cd09294">
    <property type="entry name" value="SmpB"/>
    <property type="match status" value="1"/>
</dbReference>
<dbReference type="Gene3D" id="2.40.280.10">
    <property type="match status" value="1"/>
</dbReference>
<dbReference type="HAMAP" id="MF_00023">
    <property type="entry name" value="SmpB"/>
    <property type="match status" value="1"/>
</dbReference>
<dbReference type="InterPro" id="IPR023620">
    <property type="entry name" value="SmpB"/>
</dbReference>
<dbReference type="InterPro" id="IPR000037">
    <property type="entry name" value="SsrA-bd_prot"/>
</dbReference>
<dbReference type="InterPro" id="IPR020081">
    <property type="entry name" value="SsrA-bd_prot_CS"/>
</dbReference>
<dbReference type="NCBIfam" id="NF003843">
    <property type="entry name" value="PRK05422.1"/>
    <property type="match status" value="1"/>
</dbReference>
<dbReference type="NCBIfam" id="TIGR00086">
    <property type="entry name" value="smpB"/>
    <property type="match status" value="1"/>
</dbReference>
<dbReference type="PANTHER" id="PTHR30308:SF2">
    <property type="entry name" value="SSRA-BINDING PROTEIN"/>
    <property type="match status" value="1"/>
</dbReference>
<dbReference type="PANTHER" id="PTHR30308">
    <property type="entry name" value="TMRNA-BINDING COMPONENT OF TRANS-TRANSLATION TAGGING COMPLEX"/>
    <property type="match status" value="1"/>
</dbReference>
<dbReference type="Pfam" id="PF01668">
    <property type="entry name" value="SmpB"/>
    <property type="match status" value="1"/>
</dbReference>
<dbReference type="SUPFAM" id="SSF74982">
    <property type="entry name" value="Small protein B (SmpB)"/>
    <property type="match status" value="1"/>
</dbReference>
<dbReference type="PROSITE" id="PS01317">
    <property type="entry name" value="SSRP"/>
    <property type="match status" value="1"/>
</dbReference>
<comment type="function">
    <text evidence="1">Required for rescue of stalled ribosomes mediated by trans-translation. Binds to transfer-messenger RNA (tmRNA), required for stable association of tmRNA with ribosomes. tmRNA and SmpB together mimic tRNA shape, replacing the anticodon stem-loop with SmpB. tmRNA is encoded by the ssrA gene; the 2 termini fold to resemble tRNA(Ala) and it encodes a 'tag peptide', a short internal open reading frame. During trans-translation Ala-aminoacylated tmRNA acts like a tRNA, entering the A-site of stalled ribosomes, displacing the stalled mRNA. The ribosome then switches to translate the ORF on the tmRNA; the nascent peptide is terminated with the 'tag peptide' encoded by the tmRNA and targeted for degradation. The ribosome is freed to recommence translation, which seems to be the essential function of trans-translation.</text>
</comment>
<comment type="subcellular location">
    <subcellularLocation>
        <location evidence="1">Cytoplasm</location>
    </subcellularLocation>
    <text evidence="1">The tmRNA-SmpB complex associates with stalled 70S ribosomes.</text>
</comment>
<comment type="similarity">
    <text evidence="1">Belongs to the SmpB family.</text>
</comment>
<proteinExistence type="inferred from homology"/>
<reference key="1">
    <citation type="journal article" date="2008" name="Appl. Environ. Microbiol.">
        <title>The genome of Polaromonas sp. strain JS666: insights into the evolution of a hydrocarbon- and xenobiotic-degrading bacterium, and features of relevance to biotechnology.</title>
        <authorList>
            <person name="Mattes T.E."/>
            <person name="Alexander A.K."/>
            <person name="Richardson P.M."/>
            <person name="Munk A.C."/>
            <person name="Han C.S."/>
            <person name="Stothard P."/>
            <person name="Coleman N.V."/>
        </authorList>
    </citation>
    <scope>NUCLEOTIDE SEQUENCE [LARGE SCALE GENOMIC DNA]</scope>
    <source>
        <strain>JS666 / ATCC BAA-500</strain>
    </source>
</reference>
<evidence type="ECO:0000255" key="1">
    <source>
        <dbReference type="HAMAP-Rule" id="MF_00023"/>
    </source>
</evidence>
<evidence type="ECO:0000256" key="2">
    <source>
        <dbReference type="SAM" id="MobiDB-lite"/>
    </source>
</evidence>
<keyword id="KW-0963">Cytoplasm</keyword>
<keyword id="KW-1185">Reference proteome</keyword>
<keyword id="KW-0694">RNA-binding</keyword>
<accession>Q12AT7</accession>
<name>SSRP_POLSJ</name>
<gene>
    <name evidence="1" type="primary">smpB</name>
    <name type="ordered locus">Bpro_2436</name>
</gene>
<protein>
    <recommendedName>
        <fullName evidence="1">SsrA-binding protein</fullName>
    </recommendedName>
    <alternativeName>
        <fullName evidence="1">Small protein B</fullName>
    </alternativeName>
</protein>
<sequence>MRIADNKKAIFNYHIEERFEAGMVLEGWEVKSVREGKVQLTDGYVVIRGGELFIIGCQINPLGTASTHVRPDSVRTKKLLMHKDEIRRLVGKVEQKGFTLVPLNMHWKAGKVKCEIGLAKGKGEHDKRDTIKDREGKREVERAMKSRSR</sequence>
<organism>
    <name type="scientific">Polaromonas sp. (strain JS666 / ATCC BAA-500)</name>
    <dbReference type="NCBI Taxonomy" id="296591"/>
    <lineage>
        <taxon>Bacteria</taxon>
        <taxon>Pseudomonadati</taxon>
        <taxon>Pseudomonadota</taxon>
        <taxon>Betaproteobacteria</taxon>
        <taxon>Burkholderiales</taxon>
        <taxon>Comamonadaceae</taxon>
        <taxon>Polaromonas</taxon>
    </lineage>
</organism>
<feature type="chain" id="PRO_1000002104" description="SsrA-binding protein">
    <location>
        <begin position="1"/>
        <end position="149"/>
    </location>
</feature>
<feature type="region of interest" description="Disordered" evidence="2">
    <location>
        <begin position="121"/>
        <end position="149"/>
    </location>
</feature>